<gene>
    <name evidence="1" type="primary">glyQ</name>
    <name type="ordered locus">SPD_1305</name>
</gene>
<protein>
    <recommendedName>
        <fullName evidence="1">Glycine--tRNA ligase alpha subunit</fullName>
        <ecNumber evidence="1">6.1.1.14</ecNumber>
    </recommendedName>
    <alternativeName>
        <fullName evidence="1">Glycyl-tRNA synthetase alpha subunit</fullName>
        <shortName evidence="1">GlyRS</shortName>
    </alternativeName>
</protein>
<dbReference type="EC" id="6.1.1.14" evidence="1"/>
<dbReference type="EMBL" id="CP000410">
    <property type="protein sequence ID" value="ABJ54933.1"/>
    <property type="molecule type" value="Genomic_DNA"/>
</dbReference>
<dbReference type="RefSeq" id="WP_000038729.1">
    <property type="nucleotide sequence ID" value="NZ_JAMLJR010000005.1"/>
</dbReference>
<dbReference type="SMR" id="Q04JM7"/>
<dbReference type="PaxDb" id="373153-SPD_1305"/>
<dbReference type="KEGG" id="spd:SPD_1305"/>
<dbReference type="eggNOG" id="COG0752">
    <property type="taxonomic scope" value="Bacteria"/>
</dbReference>
<dbReference type="HOGENOM" id="CLU_057066_1_0_9"/>
<dbReference type="BioCyc" id="SPNE373153:G1G6V-1407-MONOMER"/>
<dbReference type="Proteomes" id="UP000001452">
    <property type="component" value="Chromosome"/>
</dbReference>
<dbReference type="GO" id="GO:0005829">
    <property type="term" value="C:cytosol"/>
    <property type="evidence" value="ECO:0007669"/>
    <property type="project" value="TreeGrafter"/>
</dbReference>
<dbReference type="GO" id="GO:0005524">
    <property type="term" value="F:ATP binding"/>
    <property type="evidence" value="ECO:0007669"/>
    <property type="project" value="UniProtKB-UniRule"/>
</dbReference>
<dbReference type="GO" id="GO:0140096">
    <property type="term" value="F:catalytic activity, acting on a protein"/>
    <property type="evidence" value="ECO:0007669"/>
    <property type="project" value="UniProtKB-ARBA"/>
</dbReference>
<dbReference type="GO" id="GO:0004820">
    <property type="term" value="F:glycine-tRNA ligase activity"/>
    <property type="evidence" value="ECO:0007669"/>
    <property type="project" value="UniProtKB-UniRule"/>
</dbReference>
<dbReference type="GO" id="GO:0016740">
    <property type="term" value="F:transferase activity"/>
    <property type="evidence" value="ECO:0007669"/>
    <property type="project" value="UniProtKB-ARBA"/>
</dbReference>
<dbReference type="GO" id="GO:0006426">
    <property type="term" value="P:glycyl-tRNA aminoacylation"/>
    <property type="evidence" value="ECO:0007669"/>
    <property type="project" value="UniProtKB-UniRule"/>
</dbReference>
<dbReference type="CDD" id="cd00733">
    <property type="entry name" value="GlyRS_alpha_core"/>
    <property type="match status" value="1"/>
</dbReference>
<dbReference type="FunFam" id="3.30.930.10:FF:000006">
    <property type="entry name" value="Glycine--tRNA ligase alpha subunit"/>
    <property type="match status" value="1"/>
</dbReference>
<dbReference type="Gene3D" id="3.30.930.10">
    <property type="entry name" value="Bira Bifunctional Protein, Domain 2"/>
    <property type="match status" value="1"/>
</dbReference>
<dbReference type="Gene3D" id="1.20.58.180">
    <property type="entry name" value="Class II aaRS and biotin synthetases, domain 2"/>
    <property type="match status" value="1"/>
</dbReference>
<dbReference type="HAMAP" id="MF_00254">
    <property type="entry name" value="Gly_tRNA_synth_alpha"/>
    <property type="match status" value="1"/>
</dbReference>
<dbReference type="InterPro" id="IPR045864">
    <property type="entry name" value="aa-tRNA-synth_II/BPL/LPL"/>
</dbReference>
<dbReference type="InterPro" id="IPR006194">
    <property type="entry name" value="Gly-tRNA-synth_heterodimer"/>
</dbReference>
<dbReference type="InterPro" id="IPR002310">
    <property type="entry name" value="Gly-tRNA_ligase_asu"/>
</dbReference>
<dbReference type="NCBIfam" id="TIGR00388">
    <property type="entry name" value="glyQ"/>
    <property type="match status" value="1"/>
</dbReference>
<dbReference type="NCBIfam" id="NF006827">
    <property type="entry name" value="PRK09348.1"/>
    <property type="match status" value="1"/>
</dbReference>
<dbReference type="PANTHER" id="PTHR30075:SF2">
    <property type="entry name" value="GLYCINE--TRNA LIGASE, CHLOROPLASTIC_MITOCHONDRIAL 2"/>
    <property type="match status" value="1"/>
</dbReference>
<dbReference type="PANTHER" id="PTHR30075">
    <property type="entry name" value="GLYCYL-TRNA SYNTHETASE"/>
    <property type="match status" value="1"/>
</dbReference>
<dbReference type="Pfam" id="PF02091">
    <property type="entry name" value="tRNA-synt_2e"/>
    <property type="match status" value="1"/>
</dbReference>
<dbReference type="PRINTS" id="PR01044">
    <property type="entry name" value="TRNASYNTHGA"/>
</dbReference>
<dbReference type="SUPFAM" id="SSF55681">
    <property type="entry name" value="Class II aaRS and biotin synthetases"/>
    <property type="match status" value="1"/>
</dbReference>
<dbReference type="PROSITE" id="PS50861">
    <property type="entry name" value="AA_TRNA_LIGASE_II_GLYAB"/>
    <property type="match status" value="1"/>
</dbReference>
<feature type="chain" id="PRO_1000047499" description="Glycine--tRNA ligase alpha subunit">
    <location>
        <begin position="1"/>
        <end position="305"/>
    </location>
</feature>
<keyword id="KW-0030">Aminoacyl-tRNA synthetase</keyword>
<keyword id="KW-0067">ATP-binding</keyword>
<keyword id="KW-0963">Cytoplasm</keyword>
<keyword id="KW-0436">Ligase</keyword>
<keyword id="KW-0547">Nucleotide-binding</keyword>
<keyword id="KW-0648">Protein biosynthesis</keyword>
<keyword id="KW-1185">Reference proteome</keyword>
<evidence type="ECO:0000255" key="1">
    <source>
        <dbReference type="HAMAP-Rule" id="MF_00254"/>
    </source>
</evidence>
<accession>Q04JM7</accession>
<name>SYGA_STRP2</name>
<proteinExistence type="inferred from homology"/>
<comment type="catalytic activity">
    <reaction evidence="1">
        <text>tRNA(Gly) + glycine + ATP = glycyl-tRNA(Gly) + AMP + diphosphate</text>
        <dbReference type="Rhea" id="RHEA:16013"/>
        <dbReference type="Rhea" id="RHEA-COMP:9664"/>
        <dbReference type="Rhea" id="RHEA-COMP:9683"/>
        <dbReference type="ChEBI" id="CHEBI:30616"/>
        <dbReference type="ChEBI" id="CHEBI:33019"/>
        <dbReference type="ChEBI" id="CHEBI:57305"/>
        <dbReference type="ChEBI" id="CHEBI:78442"/>
        <dbReference type="ChEBI" id="CHEBI:78522"/>
        <dbReference type="ChEBI" id="CHEBI:456215"/>
        <dbReference type="EC" id="6.1.1.14"/>
    </reaction>
</comment>
<comment type="subunit">
    <text evidence="1">Tetramer of two alpha and two beta subunits.</text>
</comment>
<comment type="subcellular location">
    <subcellularLocation>
        <location evidence="1">Cytoplasm</location>
    </subcellularLocation>
</comment>
<comment type="similarity">
    <text evidence="1">Belongs to the class-II aminoacyl-tRNA synthetase family.</text>
</comment>
<reference key="1">
    <citation type="journal article" date="2007" name="J. Bacteriol.">
        <title>Genome sequence of Avery's virulent serotype 2 strain D39 of Streptococcus pneumoniae and comparison with that of unencapsulated laboratory strain R6.</title>
        <authorList>
            <person name="Lanie J.A."/>
            <person name="Ng W.-L."/>
            <person name="Kazmierczak K.M."/>
            <person name="Andrzejewski T.M."/>
            <person name="Davidsen T.M."/>
            <person name="Wayne K.J."/>
            <person name="Tettelin H."/>
            <person name="Glass J.I."/>
            <person name="Winkler M.E."/>
        </authorList>
    </citation>
    <scope>NUCLEOTIDE SEQUENCE [LARGE SCALE GENOMIC DNA]</scope>
    <source>
        <strain>D39 / NCTC 7466</strain>
    </source>
</reference>
<organism>
    <name type="scientific">Streptococcus pneumoniae serotype 2 (strain D39 / NCTC 7466)</name>
    <dbReference type="NCBI Taxonomy" id="373153"/>
    <lineage>
        <taxon>Bacteria</taxon>
        <taxon>Bacillati</taxon>
        <taxon>Bacillota</taxon>
        <taxon>Bacilli</taxon>
        <taxon>Lactobacillales</taxon>
        <taxon>Streptococcaceae</taxon>
        <taxon>Streptococcus</taxon>
    </lineage>
</organism>
<sequence>MSKKLTFQEIILTLQQFWNDQGCMLMQAYDNEKGAGTMSPYTFLRAIGPEPWNAAYVEPSRRPADGRYGENPNRLYQHHQFQVVMKPSPSNIQELYLESLEKLGINPLEHDIRFVEDNWENPSTGSAGLGWEVWLDGMEITQFTYFQQVGGLATGPVTAEVTYGLERLASYIQEVDSIYDIEWADGVKYGEIFIQPEYEHSKYSFEISDQEMLLENFDKFEKEAGRALEEGLVHPAYDYVLKCSHTFNLLDARGAVSVTERAGYIARIRNLARVVAKTFVAERKRLGYPLLDEETRVKLLAEDAE</sequence>